<proteinExistence type="inferred from homology"/>
<name>RECR_STAA3</name>
<protein>
    <recommendedName>
        <fullName evidence="1">Recombination protein RecR</fullName>
    </recommendedName>
</protein>
<reference key="1">
    <citation type="journal article" date="2006" name="Lancet">
        <title>Complete genome sequence of USA300, an epidemic clone of community-acquired meticillin-resistant Staphylococcus aureus.</title>
        <authorList>
            <person name="Diep B.A."/>
            <person name="Gill S.R."/>
            <person name="Chang R.F."/>
            <person name="Phan T.H."/>
            <person name="Chen J.H."/>
            <person name="Davidson M.G."/>
            <person name="Lin F."/>
            <person name="Lin J."/>
            <person name="Carleton H.A."/>
            <person name="Mongodin E.F."/>
            <person name="Sensabaugh G.F."/>
            <person name="Perdreau-Remington F."/>
        </authorList>
    </citation>
    <scope>NUCLEOTIDE SEQUENCE [LARGE SCALE GENOMIC DNA]</scope>
    <source>
        <strain>USA300</strain>
    </source>
</reference>
<sequence>MHYPEPISKLIDSFMKLPGIGPKTAQRLAFHTLDMKEDDVVQFAKALVDVKRELTYCSVCGHITENDPCYICEDKQRDRSVICVVEDDKDVIAMEKMREYKGLYHVLHGSISPMDGIGPEDINIPSLIERLKNDEVSELILAMNPNLEGESTAMYISRLVKPIGIKVTRLAQGLSVGGDLEYADEVTLSKAIAGRTEM</sequence>
<keyword id="KW-0227">DNA damage</keyword>
<keyword id="KW-0233">DNA recombination</keyword>
<keyword id="KW-0234">DNA repair</keyword>
<keyword id="KW-0479">Metal-binding</keyword>
<keyword id="KW-0862">Zinc</keyword>
<keyword id="KW-0863">Zinc-finger</keyword>
<accession>Q2FJG2</accession>
<dbReference type="EMBL" id="CP000255">
    <property type="protein sequence ID" value="ABD20456.1"/>
    <property type="molecule type" value="Genomic_DNA"/>
</dbReference>
<dbReference type="RefSeq" id="WP_000559156.1">
    <property type="nucleotide sequence ID" value="NZ_CP027476.1"/>
</dbReference>
<dbReference type="SMR" id="Q2FJG2"/>
<dbReference type="KEGG" id="saa:SAUSA300_0454"/>
<dbReference type="HOGENOM" id="CLU_060739_1_0_9"/>
<dbReference type="OMA" id="DVMAIEN"/>
<dbReference type="Proteomes" id="UP000001939">
    <property type="component" value="Chromosome"/>
</dbReference>
<dbReference type="GO" id="GO:0003677">
    <property type="term" value="F:DNA binding"/>
    <property type="evidence" value="ECO:0007669"/>
    <property type="project" value="UniProtKB-UniRule"/>
</dbReference>
<dbReference type="GO" id="GO:0008270">
    <property type="term" value="F:zinc ion binding"/>
    <property type="evidence" value="ECO:0007669"/>
    <property type="project" value="UniProtKB-KW"/>
</dbReference>
<dbReference type="GO" id="GO:0006310">
    <property type="term" value="P:DNA recombination"/>
    <property type="evidence" value="ECO:0007669"/>
    <property type="project" value="UniProtKB-UniRule"/>
</dbReference>
<dbReference type="GO" id="GO:0006281">
    <property type="term" value="P:DNA repair"/>
    <property type="evidence" value="ECO:0007669"/>
    <property type="project" value="UniProtKB-UniRule"/>
</dbReference>
<dbReference type="CDD" id="cd01025">
    <property type="entry name" value="TOPRIM_recR"/>
    <property type="match status" value="1"/>
</dbReference>
<dbReference type="Gene3D" id="3.30.60.80">
    <property type="match status" value="1"/>
</dbReference>
<dbReference type="Gene3D" id="3.40.1360.10">
    <property type="match status" value="1"/>
</dbReference>
<dbReference type="Gene3D" id="6.10.250.240">
    <property type="match status" value="1"/>
</dbReference>
<dbReference type="Gene3D" id="1.10.8.420">
    <property type="entry name" value="RecR Domain 1"/>
    <property type="match status" value="1"/>
</dbReference>
<dbReference type="HAMAP" id="MF_00017">
    <property type="entry name" value="RecR"/>
    <property type="match status" value="1"/>
</dbReference>
<dbReference type="InterPro" id="IPR000093">
    <property type="entry name" value="DNA_Rcmb_RecR"/>
</dbReference>
<dbReference type="InterPro" id="IPR003583">
    <property type="entry name" value="Hlx-hairpin-Hlx_DNA-bd_motif"/>
</dbReference>
<dbReference type="InterPro" id="IPR023627">
    <property type="entry name" value="Rcmb_RecR"/>
</dbReference>
<dbReference type="InterPro" id="IPR015967">
    <property type="entry name" value="Rcmb_RecR_Znf"/>
</dbReference>
<dbReference type="InterPro" id="IPR006171">
    <property type="entry name" value="TOPRIM_dom"/>
</dbReference>
<dbReference type="InterPro" id="IPR034137">
    <property type="entry name" value="TOPRIM_RecR"/>
</dbReference>
<dbReference type="NCBIfam" id="TIGR00615">
    <property type="entry name" value="recR"/>
    <property type="match status" value="1"/>
</dbReference>
<dbReference type="PANTHER" id="PTHR30446">
    <property type="entry name" value="RECOMBINATION PROTEIN RECR"/>
    <property type="match status" value="1"/>
</dbReference>
<dbReference type="PANTHER" id="PTHR30446:SF0">
    <property type="entry name" value="RECOMBINATION PROTEIN RECR"/>
    <property type="match status" value="1"/>
</dbReference>
<dbReference type="Pfam" id="PF21175">
    <property type="entry name" value="RecR_C"/>
    <property type="match status" value="1"/>
</dbReference>
<dbReference type="Pfam" id="PF21176">
    <property type="entry name" value="RecR_HhH"/>
    <property type="match status" value="1"/>
</dbReference>
<dbReference type="Pfam" id="PF02132">
    <property type="entry name" value="RecR_ZnF"/>
    <property type="match status" value="1"/>
</dbReference>
<dbReference type="Pfam" id="PF13662">
    <property type="entry name" value="Toprim_4"/>
    <property type="match status" value="1"/>
</dbReference>
<dbReference type="SMART" id="SM00278">
    <property type="entry name" value="HhH1"/>
    <property type="match status" value="1"/>
</dbReference>
<dbReference type="SMART" id="SM00493">
    <property type="entry name" value="TOPRIM"/>
    <property type="match status" value="1"/>
</dbReference>
<dbReference type="SUPFAM" id="SSF111304">
    <property type="entry name" value="Recombination protein RecR"/>
    <property type="match status" value="1"/>
</dbReference>
<dbReference type="PROSITE" id="PS01300">
    <property type="entry name" value="RECR"/>
    <property type="match status" value="1"/>
</dbReference>
<dbReference type="PROSITE" id="PS50880">
    <property type="entry name" value="TOPRIM"/>
    <property type="match status" value="1"/>
</dbReference>
<gene>
    <name evidence="1" type="primary">recR</name>
    <name type="ordered locus">SAUSA300_0454</name>
</gene>
<comment type="function">
    <text evidence="1">May play a role in DNA repair. It seems to be involved in an RecBC-independent recombinational process of DNA repair. It may act with RecF and RecO.</text>
</comment>
<comment type="similarity">
    <text evidence="1">Belongs to the RecR family.</text>
</comment>
<feature type="chain" id="PRO_1000001619" description="Recombination protein RecR">
    <location>
        <begin position="1"/>
        <end position="198"/>
    </location>
</feature>
<feature type="domain" description="Toprim" evidence="1">
    <location>
        <begin position="80"/>
        <end position="175"/>
    </location>
</feature>
<feature type="zinc finger region" description="C4-type" evidence="1">
    <location>
        <begin position="57"/>
        <end position="72"/>
    </location>
</feature>
<evidence type="ECO:0000255" key="1">
    <source>
        <dbReference type="HAMAP-Rule" id="MF_00017"/>
    </source>
</evidence>
<organism>
    <name type="scientific">Staphylococcus aureus (strain USA300)</name>
    <dbReference type="NCBI Taxonomy" id="367830"/>
    <lineage>
        <taxon>Bacteria</taxon>
        <taxon>Bacillati</taxon>
        <taxon>Bacillota</taxon>
        <taxon>Bacilli</taxon>
        <taxon>Bacillales</taxon>
        <taxon>Staphylococcaceae</taxon>
        <taxon>Staphylococcus</taxon>
    </lineage>
</organism>